<comment type="function">
    <text evidence="1">Required for meiotic recombination. Mediates DNA cleavage that forms the double-strand breaks (DSB) that initiate meiotic recombination (By similarity).</text>
</comment>
<comment type="catalytic activity">
    <reaction evidence="3">
        <text>ATP-dependent breakage, passage and rejoining of double-stranded DNA.</text>
        <dbReference type="EC" id="5.6.2.2"/>
    </reaction>
</comment>
<comment type="cofactor">
    <cofactor evidence="2">
        <name>Mg(2+)</name>
        <dbReference type="ChEBI" id="CHEBI:18420"/>
    </cofactor>
</comment>
<comment type="subunit">
    <text evidence="1">Interacts with TOP6B.</text>
</comment>
<comment type="subcellular location">
    <subcellularLocation>
        <location evidence="1">Nucleus</location>
    </subcellularLocation>
</comment>
<comment type="similarity">
    <text evidence="4">Belongs to the TOP6A family.</text>
</comment>
<evidence type="ECO:0000250" key="1"/>
<evidence type="ECO:0000250" key="2">
    <source>
        <dbReference type="UniProtKB" id="Q57815"/>
    </source>
</evidence>
<evidence type="ECO:0000255" key="3">
    <source>
        <dbReference type="PROSITE-ProRule" id="PRU01385"/>
    </source>
</evidence>
<evidence type="ECO:0000305" key="4"/>
<reference key="1">
    <citation type="submission" date="2005-06" db="EMBL/GenBank/DDBJ databases">
        <title>Isolation and characterization of rice SPO11 genes.</title>
        <authorList>
            <person name="Yamada K."/>
            <person name="Kawagishi-Kobayashi M."/>
            <person name="Shingu Y."/>
            <person name="Mikawa T."/>
            <person name="Wakasa K."/>
            <person name="Shibata T."/>
        </authorList>
    </citation>
    <scope>NUCLEOTIDE SEQUENCE [MRNA]</scope>
    <source>
        <strain>cv. Nipponbare</strain>
    </source>
</reference>
<reference key="2">
    <citation type="journal article" date="2005" name="Nature">
        <title>The map-based sequence of the rice genome.</title>
        <authorList>
            <consortium name="International rice genome sequencing project (IRGSP)"/>
        </authorList>
    </citation>
    <scope>NUCLEOTIDE SEQUENCE [LARGE SCALE GENOMIC DNA]</scope>
    <source>
        <strain>cv. Nipponbare</strain>
    </source>
</reference>
<reference key="3">
    <citation type="journal article" date="2008" name="Nucleic Acids Res.">
        <title>The rice annotation project database (RAP-DB): 2008 update.</title>
        <authorList>
            <consortium name="The rice annotation project (RAP)"/>
        </authorList>
    </citation>
    <scope>GENOME REANNOTATION</scope>
    <source>
        <strain>cv. Nipponbare</strain>
    </source>
</reference>
<reference key="4">
    <citation type="journal article" date="2013" name="Rice">
        <title>Improvement of the Oryza sativa Nipponbare reference genome using next generation sequence and optical map data.</title>
        <authorList>
            <person name="Kawahara Y."/>
            <person name="de la Bastide M."/>
            <person name="Hamilton J.P."/>
            <person name="Kanamori H."/>
            <person name="McCombie W.R."/>
            <person name="Ouyang S."/>
            <person name="Schwartz D.C."/>
            <person name="Tanaka T."/>
            <person name="Wu J."/>
            <person name="Zhou S."/>
            <person name="Childs K.L."/>
            <person name="Davidson R.M."/>
            <person name="Lin H."/>
            <person name="Quesada-Ocampo L."/>
            <person name="Vaillancourt B."/>
            <person name="Sakai H."/>
            <person name="Lee S.S."/>
            <person name="Kim J."/>
            <person name="Numa H."/>
            <person name="Itoh T."/>
            <person name="Buell C.R."/>
            <person name="Matsumoto T."/>
        </authorList>
    </citation>
    <scope>GENOME REANNOTATION</scope>
    <source>
        <strain>cv. Nipponbare</strain>
    </source>
</reference>
<dbReference type="EC" id="5.6.2.2" evidence="3"/>
<dbReference type="EMBL" id="AB219538">
    <property type="protein sequence ID" value="BAF65345.1"/>
    <property type="molecule type" value="mRNA"/>
</dbReference>
<dbReference type="EMBL" id="AP004460">
    <property type="protein sequence ID" value="BAC99506.1"/>
    <property type="molecule type" value="Genomic_DNA"/>
</dbReference>
<dbReference type="EMBL" id="AP008214">
    <property type="protein sequence ID" value="BAF22941.1"/>
    <property type="molecule type" value="Genomic_DNA"/>
</dbReference>
<dbReference type="EMBL" id="AP014964">
    <property type="protein sequence ID" value="BAT03899.1"/>
    <property type="molecule type" value="Genomic_DNA"/>
</dbReference>
<dbReference type="RefSeq" id="XP_015650817.1">
    <property type="nucleotide sequence ID" value="XM_015795331.1"/>
</dbReference>
<dbReference type="SMR" id="Q6ZD95"/>
<dbReference type="FunCoup" id="Q6ZD95">
    <property type="interactions" value="2"/>
</dbReference>
<dbReference type="STRING" id="39947.Q6ZD95"/>
<dbReference type="PaxDb" id="39947-Q6ZD95"/>
<dbReference type="EnsemblPlants" id="Os08t0156900-01">
    <property type="protein sequence ID" value="Os08t0156900-01"/>
    <property type="gene ID" value="Os08g0156900"/>
</dbReference>
<dbReference type="Gramene" id="Os08t0156900-01">
    <property type="protein sequence ID" value="Os08t0156900-01"/>
    <property type="gene ID" value="Os08g0156900"/>
</dbReference>
<dbReference type="KEGG" id="dosa:Os08g0156900"/>
<dbReference type="eggNOG" id="KOG2795">
    <property type="taxonomic scope" value="Eukaryota"/>
</dbReference>
<dbReference type="InParanoid" id="Q6ZD95"/>
<dbReference type="OMA" id="CNVKWIG"/>
<dbReference type="OrthoDB" id="5377392at2759"/>
<dbReference type="Proteomes" id="UP000000763">
    <property type="component" value="Chromosome 8"/>
</dbReference>
<dbReference type="Proteomes" id="UP000059680">
    <property type="component" value="Chromosome 8"/>
</dbReference>
<dbReference type="ExpressionAtlas" id="Q6ZD95">
    <property type="expression patterns" value="baseline and differential"/>
</dbReference>
<dbReference type="GO" id="GO:0000228">
    <property type="term" value="C:nuclear chromosome"/>
    <property type="evidence" value="ECO:0000318"/>
    <property type="project" value="GO_Central"/>
</dbReference>
<dbReference type="GO" id="GO:0005524">
    <property type="term" value="F:ATP binding"/>
    <property type="evidence" value="ECO:0007669"/>
    <property type="project" value="InterPro"/>
</dbReference>
<dbReference type="GO" id="GO:0003677">
    <property type="term" value="F:DNA binding"/>
    <property type="evidence" value="ECO:0000318"/>
    <property type="project" value="GO_Central"/>
</dbReference>
<dbReference type="GO" id="GO:0003918">
    <property type="term" value="F:DNA topoisomerase type II (double strand cut, ATP-hydrolyzing) activity"/>
    <property type="evidence" value="ECO:0007669"/>
    <property type="project" value="InterPro"/>
</dbReference>
<dbReference type="GO" id="GO:0016787">
    <property type="term" value="F:hydrolase activity"/>
    <property type="evidence" value="ECO:0007669"/>
    <property type="project" value="UniProtKB-KW"/>
</dbReference>
<dbReference type="GO" id="GO:0046872">
    <property type="term" value="F:metal ion binding"/>
    <property type="evidence" value="ECO:0007669"/>
    <property type="project" value="UniProtKB-KW"/>
</dbReference>
<dbReference type="GO" id="GO:0051026">
    <property type="term" value="P:chiasma assembly"/>
    <property type="evidence" value="ECO:0007669"/>
    <property type="project" value="EnsemblPlants"/>
</dbReference>
<dbReference type="GO" id="GO:0009553">
    <property type="term" value="P:embryo sac development"/>
    <property type="evidence" value="ECO:0007669"/>
    <property type="project" value="EnsemblPlants"/>
</dbReference>
<dbReference type="GO" id="GO:0042138">
    <property type="term" value="P:meiotic DNA double-strand break formation"/>
    <property type="evidence" value="ECO:0000318"/>
    <property type="project" value="GO_Central"/>
</dbReference>
<dbReference type="GO" id="GO:0000706">
    <property type="term" value="P:meiotic DNA double-strand break processing"/>
    <property type="evidence" value="ECO:0000318"/>
    <property type="project" value="GO_Central"/>
</dbReference>
<dbReference type="GO" id="GO:0009555">
    <property type="term" value="P:pollen development"/>
    <property type="evidence" value="ECO:0007669"/>
    <property type="project" value="EnsemblPlants"/>
</dbReference>
<dbReference type="GO" id="GO:0007131">
    <property type="term" value="P:reciprocal meiotic recombination"/>
    <property type="evidence" value="ECO:0000318"/>
    <property type="project" value="GO_Central"/>
</dbReference>
<dbReference type="GO" id="GO:0048316">
    <property type="term" value="P:seed development"/>
    <property type="evidence" value="ECO:0007669"/>
    <property type="project" value="EnsemblPlants"/>
</dbReference>
<dbReference type="CDD" id="cd00223">
    <property type="entry name" value="TOPRIM_TopoIIB_SPO"/>
    <property type="match status" value="1"/>
</dbReference>
<dbReference type="FunFam" id="1.10.10.10:FF:000487">
    <property type="entry name" value="Meiotic recombination protein SPO11-2"/>
    <property type="match status" value="1"/>
</dbReference>
<dbReference type="FunFam" id="3.40.1360.10:FF:000009">
    <property type="entry name" value="Meiotic recombination protein SPO11-2"/>
    <property type="match status" value="1"/>
</dbReference>
<dbReference type="Gene3D" id="3.40.1360.10">
    <property type="match status" value="1"/>
</dbReference>
<dbReference type="Gene3D" id="1.10.10.10">
    <property type="entry name" value="Winged helix-like DNA-binding domain superfamily/Winged helix DNA-binding domain"/>
    <property type="match status" value="1"/>
</dbReference>
<dbReference type="InterPro" id="IPR002815">
    <property type="entry name" value="Spo11/TopoVI_A"/>
</dbReference>
<dbReference type="InterPro" id="IPR013049">
    <property type="entry name" value="Spo11/TopoVI_A_N"/>
</dbReference>
<dbReference type="InterPro" id="IPR036078">
    <property type="entry name" value="Spo11/TopoVI_A_sf"/>
</dbReference>
<dbReference type="InterPro" id="IPR034136">
    <property type="entry name" value="TOPRIM_Topo6A/Spo11"/>
</dbReference>
<dbReference type="InterPro" id="IPR036388">
    <property type="entry name" value="WH-like_DNA-bd_sf"/>
</dbReference>
<dbReference type="PANTHER" id="PTHR10848">
    <property type="entry name" value="MEIOTIC RECOMBINATION PROTEIN SPO11"/>
    <property type="match status" value="1"/>
</dbReference>
<dbReference type="PANTHER" id="PTHR10848:SF0">
    <property type="entry name" value="MEIOTIC RECOMBINATION PROTEIN SPO11"/>
    <property type="match status" value="1"/>
</dbReference>
<dbReference type="Pfam" id="PF21180">
    <property type="entry name" value="TOP6A-Spo11_Toprim"/>
    <property type="match status" value="1"/>
</dbReference>
<dbReference type="Pfam" id="PF04406">
    <property type="entry name" value="TP6A_N"/>
    <property type="match status" value="1"/>
</dbReference>
<dbReference type="PRINTS" id="PR01550">
    <property type="entry name" value="TOP6AFAMILY"/>
</dbReference>
<dbReference type="SUPFAM" id="SSF56726">
    <property type="entry name" value="DNA topoisomerase IV, alpha subunit"/>
    <property type="match status" value="1"/>
</dbReference>
<dbReference type="PROSITE" id="PS52041">
    <property type="entry name" value="TOPO_IIB"/>
    <property type="match status" value="1"/>
</dbReference>
<sequence length="385" mass="42741">MAEAGVAAASLFGADRRLCSADILPPAEVRARIEVAVLNFLAALTDPAAPAISALPLISRGAANRGLRRALLRDDVSSVYLSYASCKRSLTRANDAKAFVRVWKVMEMCYKILGEGKLVTLRELFYTLLSESPTYFTCQRHVNQTVQDVVSLLRCTRQSLGIMASSRGALIGRLVVQGPEEEHVDCSILGPSGHAITGDLNVLSKLIFSSDARYIIVVEKDAIFQRLAEDRIYSHLPCILITAKGYPDLATRFILHRLSQTYPNMPIFALVDWNPAGLAILCTYKYGSISMGLESYRYACNVKWLGLRGDDLQLIPQSAYQELKPRDLQIAKSLLSSKFLQDKHRAELTLMLETGKRAEIEALYSHGFDFLGKYVARKIVQGDYI</sequence>
<organism>
    <name type="scientific">Oryza sativa subsp. japonica</name>
    <name type="common">Rice</name>
    <dbReference type="NCBI Taxonomy" id="39947"/>
    <lineage>
        <taxon>Eukaryota</taxon>
        <taxon>Viridiplantae</taxon>
        <taxon>Streptophyta</taxon>
        <taxon>Embryophyta</taxon>
        <taxon>Tracheophyta</taxon>
        <taxon>Spermatophyta</taxon>
        <taxon>Magnoliopsida</taxon>
        <taxon>Liliopsida</taxon>
        <taxon>Poales</taxon>
        <taxon>Poaceae</taxon>
        <taxon>BOP clade</taxon>
        <taxon>Oryzoideae</taxon>
        <taxon>Oryzeae</taxon>
        <taxon>Oryzinae</taxon>
        <taxon>Oryza</taxon>
        <taxon>Oryza sativa</taxon>
    </lineage>
</organism>
<gene>
    <name type="primary">SPO11-2</name>
    <name type="ordered locus">Os08g0156900</name>
    <name type="ordered locus">LOC_Os08g06050</name>
    <name type="ORF">P0438H08.23-1</name>
</gene>
<protein>
    <recommendedName>
        <fullName>Meiotic recombination protein SPO11-2</fullName>
        <shortName>OsSPO11-2</shortName>
        <ecNumber evidence="3">5.6.2.2</ecNumber>
    </recommendedName>
    <alternativeName>
        <fullName>OsSPO11B</fullName>
    </alternativeName>
    <alternativeName>
        <fullName>Topoisomerase 6 subunit A2</fullName>
        <shortName>OsTOP6A2</shortName>
    </alternativeName>
</protein>
<name>SPO12_ORYSJ</name>
<feature type="chain" id="PRO_0000429778" description="Meiotic recombination protein SPO11-2">
    <location>
        <begin position="1"/>
        <end position="385"/>
    </location>
</feature>
<feature type="domain" description="Topo IIA-type catalytic" evidence="3">
    <location>
        <begin position="24"/>
        <end position="169"/>
    </location>
</feature>
<feature type="active site" description="O-(5'-phospho-DNA)-tyrosine intermediate" evidence="3">
    <location>
        <position position="126"/>
    </location>
</feature>
<feature type="binding site" evidence="2">
    <location>
        <position position="219"/>
    </location>
    <ligand>
        <name>Mg(2+)</name>
        <dbReference type="ChEBI" id="CHEBI:18420"/>
    </ligand>
</feature>
<feature type="binding site" evidence="2">
    <location>
        <position position="272"/>
    </location>
    <ligand>
        <name>Mg(2+)</name>
        <dbReference type="ChEBI" id="CHEBI:18420"/>
    </ligand>
</feature>
<keyword id="KW-0238">DNA-binding</keyword>
<keyword id="KW-0378">Hydrolase</keyword>
<keyword id="KW-0413">Isomerase</keyword>
<keyword id="KW-0460">Magnesium</keyword>
<keyword id="KW-0479">Metal-binding</keyword>
<keyword id="KW-0539">Nucleus</keyword>
<keyword id="KW-1185">Reference proteome</keyword>
<keyword id="KW-0799">Topoisomerase</keyword>
<accession>Q6ZD95</accession>
<accession>A0A0P0XBV0</accession>
<proteinExistence type="evidence at transcript level"/>